<dbReference type="EMBL" id="AJ249236">
    <property type="status" value="NOT_ANNOTATED_CDS"/>
    <property type="molecule type" value="Genomic_RNA"/>
</dbReference>
<dbReference type="SMR" id="P0C1P4"/>
<dbReference type="Proteomes" id="UP000120463">
    <property type="component" value="Segment"/>
</dbReference>
<dbReference type="GO" id="GO:0043657">
    <property type="term" value="C:host cell"/>
    <property type="evidence" value="ECO:0007669"/>
    <property type="project" value="GOC"/>
</dbReference>
<dbReference type="GO" id="GO:0042025">
    <property type="term" value="C:host cell nucleus"/>
    <property type="evidence" value="ECO:0007669"/>
    <property type="project" value="UniProtKB-SubCell"/>
</dbReference>
<dbReference type="GO" id="GO:0043655">
    <property type="term" value="C:host extracellular space"/>
    <property type="evidence" value="ECO:0007669"/>
    <property type="project" value="UniProtKB-SubCell"/>
</dbReference>
<dbReference type="GO" id="GO:0044423">
    <property type="term" value="C:virion component"/>
    <property type="evidence" value="ECO:0007669"/>
    <property type="project" value="UniProtKB-UniRule"/>
</dbReference>
<dbReference type="GO" id="GO:0006351">
    <property type="term" value="P:DNA-templated transcription"/>
    <property type="evidence" value="ECO:0007669"/>
    <property type="project" value="UniProtKB-UniRule"/>
</dbReference>
<dbReference type="GO" id="GO:0034220">
    <property type="term" value="P:monoatomic ion transmembrane transport"/>
    <property type="evidence" value="ECO:0007669"/>
    <property type="project" value="UniProtKB-KW"/>
</dbReference>
<dbReference type="GO" id="GO:0051260">
    <property type="term" value="P:protein homooligomerization"/>
    <property type="evidence" value="ECO:0007669"/>
    <property type="project" value="UniProtKB-UniRule"/>
</dbReference>
<dbReference type="GO" id="GO:0006355">
    <property type="term" value="P:regulation of DNA-templated transcription"/>
    <property type="evidence" value="ECO:0007669"/>
    <property type="project" value="UniProtKB-UniRule"/>
</dbReference>
<dbReference type="GO" id="GO:0046718">
    <property type="term" value="P:symbiont entry into host cell"/>
    <property type="evidence" value="ECO:0007669"/>
    <property type="project" value="UniProtKB-KW"/>
</dbReference>
<dbReference type="GO" id="GO:0052151">
    <property type="term" value="P:symbiont-mediated activation of host apoptosis"/>
    <property type="evidence" value="ECO:0007669"/>
    <property type="project" value="UniProtKB-UniRule"/>
</dbReference>
<dbReference type="GO" id="GO:0039592">
    <property type="term" value="P:symbiont-mediated arrest of host cell cycle during G2/M transition"/>
    <property type="evidence" value="ECO:0007669"/>
    <property type="project" value="UniProtKB-UniRule"/>
</dbReference>
<dbReference type="GO" id="GO:0075732">
    <property type="term" value="P:viral penetration into host nucleus"/>
    <property type="evidence" value="ECO:0007669"/>
    <property type="project" value="UniProtKB-UniRule"/>
</dbReference>
<dbReference type="Gene3D" id="6.10.210.10">
    <property type="match status" value="1"/>
</dbReference>
<dbReference type="Gene3D" id="1.20.5.90">
    <property type="entry name" value="VpR/VpX protein, C-terminal domain"/>
    <property type="match status" value="1"/>
</dbReference>
<dbReference type="HAMAP" id="MF_04080">
    <property type="entry name" value="HIV_VPR"/>
    <property type="match status" value="1"/>
</dbReference>
<dbReference type="InterPro" id="IPR000012">
    <property type="entry name" value="RetroV_VpR/X"/>
</dbReference>
<dbReference type="Pfam" id="PF00522">
    <property type="entry name" value="VPR"/>
    <property type="match status" value="1"/>
</dbReference>
<dbReference type="PRINTS" id="PR00444">
    <property type="entry name" value="HIVVPRVPX"/>
</dbReference>
<keyword id="KW-0010">Activator</keyword>
<keyword id="KW-0014">AIDS</keyword>
<keyword id="KW-0053">Apoptosis</keyword>
<keyword id="KW-0131">Cell cycle</keyword>
<keyword id="KW-1079">Host G2/M cell cycle arrest by virus</keyword>
<keyword id="KW-1048">Host nucleus</keyword>
<keyword id="KW-0945">Host-virus interaction</keyword>
<keyword id="KW-0407">Ion channel</keyword>
<keyword id="KW-0406">Ion transport</keyword>
<keyword id="KW-1121">Modulation of host cell cycle by virus</keyword>
<keyword id="KW-0597">Phosphoprotein</keyword>
<keyword id="KW-0804">Transcription</keyword>
<keyword id="KW-0805">Transcription regulation</keyword>
<keyword id="KW-0813">Transport</keyword>
<keyword id="KW-1163">Viral penetration into host nucleus</keyword>
<keyword id="KW-0946">Virion</keyword>
<keyword id="KW-1160">Virus entry into host cell</keyword>
<feature type="chain" id="PRO_0000246759" description="Protein Vpr">
    <location>
        <begin position="1"/>
        <end position="96"/>
    </location>
</feature>
<feature type="region of interest" description="Homooligomerization" evidence="1">
    <location>
        <begin position="1"/>
        <end position="42"/>
    </location>
</feature>
<feature type="modified residue" description="Phosphoserine; by host" evidence="1">
    <location>
        <position position="79"/>
    </location>
</feature>
<feature type="modified residue" description="Phosphoserine; by host" evidence="1">
    <location>
        <position position="94"/>
    </location>
</feature>
<feature type="modified residue" description="Phosphoserine; by host" evidence="1">
    <location>
        <position position="96"/>
    </location>
</feature>
<evidence type="ECO:0000255" key="1">
    <source>
        <dbReference type="HAMAP-Rule" id="MF_04080"/>
    </source>
</evidence>
<protein>
    <recommendedName>
        <fullName evidence="1">Protein Vpr</fullName>
    </recommendedName>
    <alternativeName>
        <fullName evidence="1">R ORF protein</fullName>
    </alternativeName>
    <alternativeName>
        <fullName evidence="1">Viral protein R</fullName>
    </alternativeName>
</protein>
<accession>P0C1P4</accession>
<proteinExistence type="inferred from homology"/>
<gene>
    <name evidence="1" type="primary">vpr</name>
</gene>
<name>VPR_HV1MP</name>
<organismHost>
    <name type="scientific">Homo sapiens</name>
    <name type="common">Human</name>
    <dbReference type="NCBI Taxonomy" id="9606"/>
</organismHost>
<reference key="1">
    <citation type="journal article" date="2000" name="AIDS Res. Hum. Retroviruses">
        <title>Near-full-length genome sequencing of divergent African HIV type 1 subtype F viruses leads to the identification of a new HIV type 1 subtype designated K.</title>
        <authorList>
            <person name="Triques K."/>
            <person name="Bourgeois A."/>
            <person name="Vidale N."/>
            <person name="Mpoudi-Ngole E."/>
            <person name="Mulanga-Kabeya C."/>
            <person name="Nzilambi N."/>
            <person name="Torimiro N."/>
            <person name="Saman E."/>
            <person name="Delaporte E."/>
            <person name="Peeters M."/>
        </authorList>
    </citation>
    <scope>NUCLEOTIDE SEQUENCE [GENOMIC RNA]</scope>
</reference>
<sequence>MEQPPEDQGPQREPYNEWTLELLEELKNEAVRHFPREYLHGLGQYIYNTYGDTWRGVETMIRILQQLLFIHFRIGCHHSRIGIIRQRRLRNGSSRS</sequence>
<organism>
    <name type="scientific">Human immunodeficiency virus type 1 group M subtype F2 (isolate MP255)</name>
    <name type="common">HIV-1</name>
    <dbReference type="NCBI Taxonomy" id="388815"/>
    <lineage>
        <taxon>Viruses</taxon>
        <taxon>Riboviria</taxon>
        <taxon>Pararnavirae</taxon>
        <taxon>Artverviricota</taxon>
        <taxon>Revtraviricetes</taxon>
        <taxon>Ortervirales</taxon>
        <taxon>Retroviridae</taxon>
        <taxon>Orthoretrovirinae</taxon>
        <taxon>Lentivirus</taxon>
        <taxon>Human immunodeficiency virus type 1</taxon>
    </lineage>
</organism>
<comment type="function">
    <text evidence="1">During virus replication, may deplete host UNG protein, and incude G2-M cell cycle arrest. Acts by targeting specific host proteins for degradation by the 26S proteasome, through association with the cellular CUL4A-DDB1 E3 ligase complex by direct interaction with host VPRPB/DCAF-1. Cell cycle arrest reportedly occurs within hours of infection and is not blocked by antiviral agents, suggesting that it is initiated by the VPR carried into the virion. Additionally, VPR induces apoptosis in a cell cycle dependent manner suggesting that these two effects are mechanistically linked. Detected in the serum and cerebrospinal fluid of AIDS patient, VPR may also induce cell death to bystander cells.</text>
</comment>
<comment type="function">
    <text evidence="1">During virus entry, plays a role in the transport of the viral pre-integration (PIC) complex to the host nucleus. This function is crucial for viral infection of non-dividing macrophages. May act directly at the nuclear pore complex, by binding nucleoporins phenylalanine-glycine (FG)-repeat regions.</text>
</comment>
<comment type="subunit">
    <text evidence="1">Homooligomer, may form homodimer. Interacts with p6-gag region of the Pr55 Gag precursor protein through a (Leu-X-X)4 motif near the C-terminus of the P6gag protein. Interacts with host UNG. May interact with host RAD23A/HHR23A. Interacts with host VPRBP/DCAF1, leading to hijack the CUL4A-RBX1-DDB1-DCAF1/VPRBP complex, mediating ubiquitination of host proteins such as TERT and ZGPAT and arrest of the cell cycle in G2 phase.</text>
</comment>
<comment type="subcellular location">
    <subcellularLocation>
        <location evidence="1">Virion</location>
    </subcellularLocation>
    <subcellularLocation>
        <location evidence="1">Host nucleus</location>
    </subcellularLocation>
    <subcellularLocation>
        <location evidence="1">Host extracellular space</location>
    </subcellularLocation>
    <text evidence="1">Incorporation into virion is dependent on p6 GAG sequences. Lacks a canonical nuclear localization signal, thus import into nucleus may function independently of the human importin pathway. Detected in high quantity in the serum and cerebrospinal fluid of AIDS patient.</text>
</comment>
<comment type="PTM">
    <text evidence="1">Phosphorylated on several residues by host. These phosphorylations regulate VPR activity for the nuclear import of the HIV-1 pre-integration complex.</text>
</comment>
<comment type="miscellaneous">
    <text evidence="1">HIV-1 lineages are divided in three main groups, M (for Major), O (for Outlier), and N (for New, or Non-M, Non-O). The vast majority of strains found worldwide belong to the group M. Group O seems to be endemic to and largely confined to Cameroon and neighboring countries in West Central Africa, where these viruses represent a small minority of HIV-1 strains. The group N is represented by a limited number of isolates from Cameroonian persons. The group M is further subdivided in 9 clades or subtypes (A to D, F to H, J and K).</text>
</comment>
<comment type="similarity">
    <text evidence="1">Belongs to the HIV-1 VPR protein family.</text>
</comment>